<reference key="1">
    <citation type="journal article" date="2007" name="Theor. Appl. Genet.">
        <title>Complete chloroplast genome sequences of Hordeum vulgare, Sorghum bicolor and Agrostis stolonifera, and comparative analyses with other grass genomes.</title>
        <authorList>
            <person name="Saski C."/>
            <person name="Lee S.-B."/>
            <person name="Fjellheim S."/>
            <person name="Guda C."/>
            <person name="Jansen R.K."/>
            <person name="Luo H."/>
            <person name="Tomkins J."/>
            <person name="Rognli O.A."/>
            <person name="Daniell H."/>
            <person name="Clarke J.L."/>
        </authorList>
    </citation>
    <scope>NUCLEOTIDE SEQUENCE [LARGE SCALE GENOMIC DNA]</scope>
    <source>
        <strain>cv. BTx623</strain>
    </source>
</reference>
<name>RK23B_SORBI</name>
<comment type="function">
    <text evidence="1">Binds to 23S rRNA.</text>
</comment>
<comment type="subunit">
    <text evidence="1">Part of the 50S ribosomal subunit.</text>
</comment>
<comment type="subcellular location">
    <subcellularLocation>
        <location>Plastid</location>
        <location>Chloroplast</location>
    </subcellularLocation>
</comment>
<comment type="similarity">
    <text evidence="2">Belongs to the universal ribosomal protein uL23 family.</text>
</comment>
<gene>
    <name type="primary">rpl23-B</name>
</gene>
<organism>
    <name type="scientific">Sorghum bicolor</name>
    <name type="common">Sorghum</name>
    <name type="synonym">Sorghum vulgare</name>
    <dbReference type="NCBI Taxonomy" id="4558"/>
    <lineage>
        <taxon>Eukaryota</taxon>
        <taxon>Viridiplantae</taxon>
        <taxon>Streptophyta</taxon>
        <taxon>Embryophyta</taxon>
        <taxon>Tracheophyta</taxon>
        <taxon>Spermatophyta</taxon>
        <taxon>Magnoliopsida</taxon>
        <taxon>Liliopsida</taxon>
        <taxon>Poales</taxon>
        <taxon>Poaceae</taxon>
        <taxon>PACMAD clade</taxon>
        <taxon>Panicoideae</taxon>
        <taxon>Andropogonodae</taxon>
        <taxon>Andropogoneae</taxon>
        <taxon>Sorghinae</taxon>
        <taxon>Sorghum</taxon>
    </lineage>
</organism>
<feature type="chain" id="PRO_0000277156" description="Large ribosomal subunit protein uL23cy">
    <location>
        <begin position="1"/>
        <end position="93"/>
    </location>
</feature>
<proteinExistence type="inferred from homology"/>
<dbReference type="EMBL" id="EF115542">
    <property type="protein sequence ID" value="ABK79538.1"/>
    <property type="molecule type" value="Genomic_DNA"/>
</dbReference>
<dbReference type="EMBL" id="EF115542">
    <property type="protein sequence ID" value="ABK79557.1"/>
    <property type="molecule type" value="Genomic_DNA"/>
</dbReference>
<dbReference type="SMR" id="A1E9W7"/>
<dbReference type="FunCoup" id="A1E9W7">
    <property type="interactions" value="56"/>
</dbReference>
<dbReference type="STRING" id="4558.A1E9W7"/>
<dbReference type="KEGG" id="sbi:4549095"/>
<dbReference type="KEGG" id="sbi:4549141"/>
<dbReference type="eggNOG" id="ENOG502S1Z9">
    <property type="taxonomic scope" value="Eukaryota"/>
</dbReference>
<dbReference type="InParanoid" id="A1E9W7"/>
<dbReference type="OrthoDB" id="563989at2759"/>
<dbReference type="Proteomes" id="UP000000768">
    <property type="component" value="Chloroplast"/>
</dbReference>
<dbReference type="ExpressionAtlas" id="A1E9W7">
    <property type="expression patterns" value="baseline"/>
</dbReference>
<dbReference type="GO" id="GO:0009507">
    <property type="term" value="C:chloroplast"/>
    <property type="evidence" value="ECO:0007669"/>
    <property type="project" value="UniProtKB-SubCell"/>
</dbReference>
<dbReference type="GO" id="GO:0022625">
    <property type="term" value="C:cytosolic large ribosomal subunit"/>
    <property type="evidence" value="ECO:0000318"/>
    <property type="project" value="GO_Central"/>
</dbReference>
<dbReference type="GO" id="GO:0019843">
    <property type="term" value="F:rRNA binding"/>
    <property type="evidence" value="ECO:0007669"/>
    <property type="project" value="UniProtKB-UniRule"/>
</dbReference>
<dbReference type="GO" id="GO:0003735">
    <property type="term" value="F:structural constituent of ribosome"/>
    <property type="evidence" value="ECO:0000318"/>
    <property type="project" value="GO_Central"/>
</dbReference>
<dbReference type="GO" id="GO:0006412">
    <property type="term" value="P:translation"/>
    <property type="evidence" value="ECO:0007669"/>
    <property type="project" value="UniProtKB-UniRule"/>
</dbReference>
<dbReference type="FunFam" id="3.30.70.330:FF:000002">
    <property type="entry name" value="50S ribosomal protein L23, chloroplastic"/>
    <property type="match status" value="1"/>
</dbReference>
<dbReference type="Gene3D" id="3.30.70.330">
    <property type="match status" value="1"/>
</dbReference>
<dbReference type="HAMAP" id="MF_01369_B">
    <property type="entry name" value="Ribosomal_uL23_B"/>
    <property type="match status" value="1"/>
</dbReference>
<dbReference type="InterPro" id="IPR012677">
    <property type="entry name" value="Nucleotide-bd_a/b_plait_sf"/>
</dbReference>
<dbReference type="InterPro" id="IPR013025">
    <property type="entry name" value="Ribosomal_uL23-like"/>
</dbReference>
<dbReference type="InterPro" id="IPR012678">
    <property type="entry name" value="Ribosomal_uL23/eL15/eS24_sf"/>
</dbReference>
<dbReference type="InterPro" id="IPR001014">
    <property type="entry name" value="Ribosomal_uL23_CS"/>
</dbReference>
<dbReference type="PANTHER" id="PTHR11620">
    <property type="entry name" value="60S RIBOSOMAL PROTEIN L23A"/>
    <property type="match status" value="1"/>
</dbReference>
<dbReference type="Pfam" id="PF00276">
    <property type="entry name" value="Ribosomal_L23"/>
    <property type="match status" value="1"/>
</dbReference>
<dbReference type="SUPFAM" id="SSF54189">
    <property type="entry name" value="Ribosomal proteins S24e, L23 and L15e"/>
    <property type="match status" value="1"/>
</dbReference>
<dbReference type="PROSITE" id="PS00050">
    <property type="entry name" value="RIBOSOMAL_L23"/>
    <property type="match status" value="1"/>
</dbReference>
<accession>A1E9W7</accession>
<geneLocation type="chloroplast"/>
<evidence type="ECO:0000250" key="1"/>
<evidence type="ECO:0000305" key="2"/>
<keyword id="KW-0150">Chloroplast</keyword>
<keyword id="KW-0934">Plastid</keyword>
<keyword id="KW-1185">Reference proteome</keyword>
<keyword id="KW-0687">Ribonucleoprotein</keyword>
<keyword id="KW-0689">Ribosomal protein</keyword>
<keyword id="KW-0694">RNA-binding</keyword>
<keyword id="KW-0699">rRNA-binding</keyword>
<protein>
    <recommendedName>
        <fullName evidence="2">Large ribosomal subunit protein uL23cy</fullName>
    </recommendedName>
    <alternativeName>
        <fullName>50S ribosomal protein L23-B, chloroplastic</fullName>
    </alternativeName>
</protein>
<sequence>MDGIKYAVFTEKSLRLLGKNQYTFNVESGFTKTEIKHWVELFFGVKVVAVNSHRLPGKGRRMGPILGHTMHYRRMIITLQPGYSIPLLDRETN</sequence>